<proteinExistence type="inferred from homology"/>
<feature type="chain" id="PRO_0000388396" description="Probable lysine--tRNA ligase, cytoplasmic">
    <location>
        <begin position="1"/>
        <end position="514"/>
    </location>
</feature>
<reference key="1">
    <citation type="journal article" date="2009" name="PLoS Pathog.">
        <title>Genomic analyses of the microsporidian Nosema ceranae, an emergent pathogen of honey bees.</title>
        <authorList>
            <person name="Cornman R.S."/>
            <person name="Chen Y.P."/>
            <person name="Schatz M.C."/>
            <person name="Street C."/>
            <person name="Zhao Y."/>
            <person name="Desany B."/>
            <person name="Egholm M."/>
            <person name="Hutchison S."/>
            <person name="Pettis J.S."/>
            <person name="Lipkin W.I."/>
            <person name="Evans J.D."/>
        </authorList>
    </citation>
    <scope>NUCLEOTIDE SEQUENCE [LARGE SCALE GENOMIC DNA]</scope>
    <source>
        <strain>BRL01</strain>
    </source>
</reference>
<comment type="catalytic activity">
    <reaction>
        <text>tRNA(Lys) + L-lysine + ATP = L-lysyl-tRNA(Lys) + AMP + diphosphate</text>
        <dbReference type="Rhea" id="RHEA:20792"/>
        <dbReference type="Rhea" id="RHEA-COMP:9696"/>
        <dbReference type="Rhea" id="RHEA-COMP:9697"/>
        <dbReference type="ChEBI" id="CHEBI:30616"/>
        <dbReference type="ChEBI" id="CHEBI:32551"/>
        <dbReference type="ChEBI" id="CHEBI:33019"/>
        <dbReference type="ChEBI" id="CHEBI:78442"/>
        <dbReference type="ChEBI" id="CHEBI:78529"/>
        <dbReference type="ChEBI" id="CHEBI:456215"/>
        <dbReference type="EC" id="6.1.1.6"/>
    </reaction>
</comment>
<comment type="subunit">
    <text evidence="1">Homodimer.</text>
</comment>
<comment type="subcellular location">
    <subcellularLocation>
        <location evidence="1">Cytoplasm</location>
    </subcellularLocation>
</comment>
<comment type="similarity">
    <text evidence="2">Belongs to the class-II aminoacyl-tRNA synthetase family.</text>
</comment>
<dbReference type="EC" id="6.1.1.6"/>
<dbReference type="EMBL" id="ACOL01000065">
    <property type="protein sequence ID" value="EEQ82379.1"/>
    <property type="molecule type" value="Genomic_DNA"/>
</dbReference>
<dbReference type="RefSeq" id="XP_002996050.1">
    <property type="nucleotide sequence ID" value="XM_002996004.1"/>
</dbReference>
<dbReference type="SMR" id="C4V8R9"/>
<dbReference type="FunCoup" id="C4V8R9">
    <property type="interactions" value="295"/>
</dbReference>
<dbReference type="STRING" id="578460.C4V8R9"/>
<dbReference type="KEGG" id="nce:NCER_100909"/>
<dbReference type="VEuPathDB" id="MicrosporidiaDB:NCER_100909"/>
<dbReference type="HOGENOM" id="CLU_008255_6_0_1"/>
<dbReference type="InParanoid" id="C4V8R9"/>
<dbReference type="OMA" id="DFRNEGM"/>
<dbReference type="OrthoDB" id="6206at6029"/>
<dbReference type="Proteomes" id="UP000009082">
    <property type="component" value="Unassembled WGS sequence"/>
</dbReference>
<dbReference type="GO" id="GO:0005829">
    <property type="term" value="C:cytosol"/>
    <property type="evidence" value="ECO:0007669"/>
    <property type="project" value="TreeGrafter"/>
</dbReference>
<dbReference type="GO" id="GO:0005524">
    <property type="term" value="F:ATP binding"/>
    <property type="evidence" value="ECO:0007669"/>
    <property type="project" value="UniProtKB-KW"/>
</dbReference>
<dbReference type="GO" id="GO:0004824">
    <property type="term" value="F:lysine-tRNA ligase activity"/>
    <property type="evidence" value="ECO:0007669"/>
    <property type="project" value="UniProtKB-EC"/>
</dbReference>
<dbReference type="GO" id="GO:0000049">
    <property type="term" value="F:tRNA binding"/>
    <property type="evidence" value="ECO:0007669"/>
    <property type="project" value="TreeGrafter"/>
</dbReference>
<dbReference type="GO" id="GO:0006430">
    <property type="term" value="P:lysyl-tRNA aminoacylation"/>
    <property type="evidence" value="ECO:0007669"/>
    <property type="project" value="InterPro"/>
</dbReference>
<dbReference type="CDD" id="cd00775">
    <property type="entry name" value="LysRS_core"/>
    <property type="match status" value="1"/>
</dbReference>
<dbReference type="CDD" id="cd04322">
    <property type="entry name" value="LysRS_N"/>
    <property type="match status" value="1"/>
</dbReference>
<dbReference type="FunFam" id="3.30.930.10:FF:000238">
    <property type="entry name" value="Lysine--tRNA ligase"/>
    <property type="match status" value="1"/>
</dbReference>
<dbReference type="Gene3D" id="3.30.930.10">
    <property type="entry name" value="Bira Bifunctional Protein, Domain 2"/>
    <property type="match status" value="1"/>
</dbReference>
<dbReference type="Gene3D" id="2.40.50.140">
    <property type="entry name" value="Nucleic acid-binding proteins"/>
    <property type="match status" value="1"/>
</dbReference>
<dbReference type="HAMAP" id="MF_00252">
    <property type="entry name" value="Lys_tRNA_synth_class2"/>
    <property type="match status" value="1"/>
</dbReference>
<dbReference type="InterPro" id="IPR004364">
    <property type="entry name" value="Aa-tRNA-synt_II"/>
</dbReference>
<dbReference type="InterPro" id="IPR006195">
    <property type="entry name" value="aa-tRNA-synth_II"/>
</dbReference>
<dbReference type="InterPro" id="IPR045864">
    <property type="entry name" value="aa-tRNA-synth_II/BPL/LPL"/>
</dbReference>
<dbReference type="InterPro" id="IPR002313">
    <property type="entry name" value="Lys-tRNA-ligase_II"/>
</dbReference>
<dbReference type="InterPro" id="IPR034762">
    <property type="entry name" value="Lys-tRNA-ligase_II_bac/euk"/>
</dbReference>
<dbReference type="InterPro" id="IPR044136">
    <property type="entry name" value="Lys-tRNA-ligase_II_N"/>
</dbReference>
<dbReference type="InterPro" id="IPR018149">
    <property type="entry name" value="Lys-tRNA-synth_II_C"/>
</dbReference>
<dbReference type="InterPro" id="IPR012340">
    <property type="entry name" value="NA-bd_OB-fold"/>
</dbReference>
<dbReference type="InterPro" id="IPR004365">
    <property type="entry name" value="NA-bd_OB_tRNA"/>
</dbReference>
<dbReference type="NCBIfam" id="TIGR00499">
    <property type="entry name" value="lysS_bact"/>
    <property type="match status" value="1"/>
</dbReference>
<dbReference type="NCBIfam" id="NF001756">
    <property type="entry name" value="PRK00484.1"/>
    <property type="match status" value="1"/>
</dbReference>
<dbReference type="PANTHER" id="PTHR42918:SF9">
    <property type="entry name" value="LYSINE--TRNA LIGASE"/>
    <property type="match status" value="1"/>
</dbReference>
<dbReference type="PANTHER" id="PTHR42918">
    <property type="entry name" value="LYSYL-TRNA SYNTHETASE"/>
    <property type="match status" value="1"/>
</dbReference>
<dbReference type="Pfam" id="PF00152">
    <property type="entry name" value="tRNA-synt_2"/>
    <property type="match status" value="1"/>
</dbReference>
<dbReference type="Pfam" id="PF01336">
    <property type="entry name" value="tRNA_anti-codon"/>
    <property type="match status" value="1"/>
</dbReference>
<dbReference type="PIRSF" id="PIRSF039101">
    <property type="entry name" value="LysRS2"/>
    <property type="match status" value="1"/>
</dbReference>
<dbReference type="PRINTS" id="PR00982">
    <property type="entry name" value="TRNASYNTHLYS"/>
</dbReference>
<dbReference type="SUPFAM" id="SSF55681">
    <property type="entry name" value="Class II aaRS and biotin synthetases"/>
    <property type="match status" value="1"/>
</dbReference>
<dbReference type="SUPFAM" id="SSF50249">
    <property type="entry name" value="Nucleic acid-binding proteins"/>
    <property type="match status" value="1"/>
</dbReference>
<dbReference type="PROSITE" id="PS50862">
    <property type="entry name" value="AA_TRNA_LIGASE_II"/>
    <property type="match status" value="1"/>
</dbReference>
<accession>C4V8R9</accession>
<protein>
    <recommendedName>
        <fullName>Probable lysine--tRNA ligase, cytoplasmic</fullName>
        <ecNumber>6.1.1.6</ecNumber>
    </recommendedName>
    <alternativeName>
        <fullName>Lysyl-tRNA synthetase</fullName>
        <shortName>LysRS</shortName>
    </alternativeName>
</protein>
<name>SYKC_VAIC1</name>
<organism>
    <name type="scientific">Vairimorpha ceranae (strain BRL01)</name>
    <name type="common">Microsporidian parasite</name>
    <name type="synonym">Nosema ceranae</name>
    <dbReference type="NCBI Taxonomy" id="578460"/>
    <lineage>
        <taxon>Eukaryota</taxon>
        <taxon>Fungi</taxon>
        <taxon>Fungi incertae sedis</taxon>
        <taxon>Microsporidia</taxon>
        <taxon>Nosematidae</taxon>
        <taxon>Vairimorpha</taxon>
    </lineage>
</organism>
<keyword id="KW-0030">Aminoacyl-tRNA synthetase</keyword>
<keyword id="KW-0067">ATP-binding</keyword>
<keyword id="KW-0963">Cytoplasm</keyword>
<keyword id="KW-0436">Ligase</keyword>
<keyword id="KW-0547">Nucleotide-binding</keyword>
<keyword id="KW-0648">Protein biosynthesis</keyword>
<keyword id="KW-1185">Reference proteome</keyword>
<sequence>MSTKNNSNVPEISDEEFYKNRLLTVTEQLKDNVQVYPHKYEVNYRFKDIFTFKDASEEDLKKVKVQSAGRILNFRIHARYSFFQVMSEDFTIQLVVDAQVLENKDIISNIKRGDIVGFSGVLGRTKTKEFSVFIKELSILTPCLRTIPTDYYGLKDPEIIYRKRYLDLLINKESKNRFIQRTNIIKFIRKYLDDKDFVEVETPLLNIIPTGAAAKPFTTHHNELKMNLFLRIAPELYLKKLVIGGMDRVYEIGKLFRNEGIDLTHNPEFTACEFYMAYADYNDMMNMAEEMLNGMCKYLHGSEKIVYAPNKREKEVKPVEINFARPFARFHMLEELSKVVGIKLDGLNINSDETLDLLIETCDKYEIKVEQPKTLTRVLDKLVGHFIEPKCINPSFIIGYPLVTSPLAKNHRSEAGMVERFELFINGKEICNAYTELNNPIEQRMRFKMQAQDINDGDDEAMITDEDFCVALEYGLPPTGGFGMGIDRLTMFMTDAANIKDVILFPAMKPESDN</sequence>
<evidence type="ECO:0000250" key="1"/>
<evidence type="ECO:0000305" key="2"/>
<gene>
    <name type="ORF">NCER_100909</name>
</gene>